<reference key="1">
    <citation type="journal article" date="2003" name="Nature">
        <title>Unique physiological and pathogenic features of Leptospira interrogans revealed by whole-genome sequencing.</title>
        <authorList>
            <person name="Ren S.-X."/>
            <person name="Fu G."/>
            <person name="Jiang X.-G."/>
            <person name="Zeng R."/>
            <person name="Miao Y.-G."/>
            <person name="Xu H."/>
            <person name="Zhang Y.-X."/>
            <person name="Xiong H."/>
            <person name="Lu G."/>
            <person name="Lu L.-F."/>
            <person name="Jiang H.-Q."/>
            <person name="Jia J."/>
            <person name="Tu Y.-F."/>
            <person name="Jiang J.-X."/>
            <person name="Gu W.-Y."/>
            <person name="Zhang Y.-Q."/>
            <person name="Cai Z."/>
            <person name="Sheng H.-H."/>
            <person name="Yin H.-F."/>
            <person name="Zhang Y."/>
            <person name="Zhu G.-F."/>
            <person name="Wan M."/>
            <person name="Huang H.-L."/>
            <person name="Qian Z."/>
            <person name="Wang S.-Y."/>
            <person name="Ma W."/>
            <person name="Yao Z.-J."/>
            <person name="Shen Y."/>
            <person name="Qiang B.-Q."/>
            <person name="Xia Q.-C."/>
            <person name="Guo X.-K."/>
            <person name="Danchin A."/>
            <person name="Saint Girons I."/>
            <person name="Somerville R.L."/>
            <person name="Wen Y.-M."/>
            <person name="Shi M.-H."/>
            <person name="Chen Z."/>
            <person name="Xu J.-G."/>
            <person name="Zhao G.-P."/>
        </authorList>
    </citation>
    <scope>NUCLEOTIDE SEQUENCE [LARGE SCALE GENOMIC DNA]</scope>
    <source>
        <strain>56601</strain>
    </source>
</reference>
<organism>
    <name type="scientific">Leptospira interrogans serogroup Icterohaemorrhagiae serovar Lai (strain 56601)</name>
    <dbReference type="NCBI Taxonomy" id="189518"/>
    <lineage>
        <taxon>Bacteria</taxon>
        <taxon>Pseudomonadati</taxon>
        <taxon>Spirochaetota</taxon>
        <taxon>Spirochaetia</taxon>
        <taxon>Leptospirales</taxon>
        <taxon>Leptospiraceae</taxon>
        <taxon>Leptospira</taxon>
    </lineage>
</organism>
<sequence length="495" mass="56611">MSESNELIEQRIQKIEELKKQGINPYPVRFFPDSKSKDIAEKFEKNPTGPETKFKLGGRLHSKRVMGKASFAHLKDNSGIIQLYATKDDLGETQYSIFKSLDLGDIIGLEGYLFKTQKGEITLHVTSVELLAKCIRPLPVVKEKDGVVYDAFADVEQRYRMRYVDLIVNDHVRDTFITRSKIVSEIRSFLTQEGFLEVETPMMQPIAGGAAARPFVTHHNTLDMQLFLRIAPELYLKRLIVGGMDRVFELNRNFRNEGISTKHNPEFTMMEAYMAFGDMSTMLDLTERLITHLAQKICGTLKIQYGKDLIDLSPPWKRTTYVDIIKEYSGIDFSQIISLEEAKKKASELKVDVSKCQTIWKVADEVFSEKAEPNLIQPIFITDYPKELSPLAKSNPDKPGYVERFEPYVAGREIGNAFTELNDPFDQKERFEDQVKQREAGDDEAFMMDEDYIRALEYGMPPTGGLGIGIDRLVMLLTNSHSIRDTILFPLMRPE</sequence>
<evidence type="ECO:0000255" key="1">
    <source>
        <dbReference type="HAMAP-Rule" id="MF_00252"/>
    </source>
</evidence>
<accession>Q8F4P5</accession>
<protein>
    <recommendedName>
        <fullName evidence="1">Lysine--tRNA ligase</fullName>
        <ecNumber evidence="1">6.1.1.6</ecNumber>
    </recommendedName>
    <alternativeName>
        <fullName evidence="1">Lysyl-tRNA synthetase</fullName>
        <shortName evidence="1">LysRS</shortName>
    </alternativeName>
</protein>
<feature type="chain" id="PRO_0000152641" description="Lysine--tRNA ligase">
    <location>
        <begin position="1"/>
        <end position="495"/>
    </location>
</feature>
<feature type="binding site" evidence="1">
    <location>
        <position position="406"/>
    </location>
    <ligand>
        <name>Mg(2+)</name>
        <dbReference type="ChEBI" id="CHEBI:18420"/>
        <label>1</label>
    </ligand>
</feature>
<feature type="binding site" evidence="1">
    <location>
        <position position="413"/>
    </location>
    <ligand>
        <name>Mg(2+)</name>
        <dbReference type="ChEBI" id="CHEBI:18420"/>
        <label>1</label>
    </ligand>
</feature>
<feature type="binding site" evidence="1">
    <location>
        <position position="413"/>
    </location>
    <ligand>
        <name>Mg(2+)</name>
        <dbReference type="ChEBI" id="CHEBI:18420"/>
        <label>2</label>
    </ligand>
</feature>
<name>SYK_LEPIN</name>
<comment type="catalytic activity">
    <reaction evidence="1">
        <text>tRNA(Lys) + L-lysine + ATP = L-lysyl-tRNA(Lys) + AMP + diphosphate</text>
        <dbReference type="Rhea" id="RHEA:20792"/>
        <dbReference type="Rhea" id="RHEA-COMP:9696"/>
        <dbReference type="Rhea" id="RHEA-COMP:9697"/>
        <dbReference type="ChEBI" id="CHEBI:30616"/>
        <dbReference type="ChEBI" id="CHEBI:32551"/>
        <dbReference type="ChEBI" id="CHEBI:33019"/>
        <dbReference type="ChEBI" id="CHEBI:78442"/>
        <dbReference type="ChEBI" id="CHEBI:78529"/>
        <dbReference type="ChEBI" id="CHEBI:456215"/>
        <dbReference type="EC" id="6.1.1.6"/>
    </reaction>
</comment>
<comment type="cofactor">
    <cofactor evidence="1">
        <name>Mg(2+)</name>
        <dbReference type="ChEBI" id="CHEBI:18420"/>
    </cofactor>
    <text evidence="1">Binds 3 Mg(2+) ions per subunit.</text>
</comment>
<comment type="subunit">
    <text evidence="1">Homodimer.</text>
</comment>
<comment type="subcellular location">
    <subcellularLocation>
        <location evidence="1">Cytoplasm</location>
    </subcellularLocation>
</comment>
<comment type="similarity">
    <text evidence="1">Belongs to the class-II aminoacyl-tRNA synthetase family.</text>
</comment>
<dbReference type="EC" id="6.1.1.6" evidence="1"/>
<dbReference type="EMBL" id="AE010300">
    <property type="protein sequence ID" value="AAN49194.1"/>
    <property type="molecule type" value="Genomic_DNA"/>
</dbReference>
<dbReference type="RefSeq" id="NP_712176.1">
    <property type="nucleotide sequence ID" value="NC_004342.2"/>
</dbReference>
<dbReference type="RefSeq" id="WP_000004512.1">
    <property type="nucleotide sequence ID" value="NC_004342.2"/>
</dbReference>
<dbReference type="SMR" id="Q8F4P5"/>
<dbReference type="FunCoup" id="Q8F4P5">
    <property type="interactions" value="570"/>
</dbReference>
<dbReference type="STRING" id="189518.LA_1995"/>
<dbReference type="PaxDb" id="189518-LA_1995"/>
<dbReference type="EnsemblBacteria" id="AAN49194">
    <property type="protein sequence ID" value="AAN49194"/>
    <property type="gene ID" value="LA_1995"/>
</dbReference>
<dbReference type="KEGG" id="lil:LA_1995"/>
<dbReference type="PATRIC" id="fig|189518.3.peg.1990"/>
<dbReference type="HOGENOM" id="CLU_008255_6_0_12"/>
<dbReference type="InParanoid" id="Q8F4P5"/>
<dbReference type="OrthoDB" id="9802326at2"/>
<dbReference type="Proteomes" id="UP000001408">
    <property type="component" value="Chromosome I"/>
</dbReference>
<dbReference type="GO" id="GO:0005737">
    <property type="term" value="C:cytoplasm"/>
    <property type="evidence" value="ECO:0000318"/>
    <property type="project" value="GO_Central"/>
</dbReference>
<dbReference type="GO" id="GO:0005829">
    <property type="term" value="C:cytosol"/>
    <property type="evidence" value="ECO:0000318"/>
    <property type="project" value="GO_Central"/>
</dbReference>
<dbReference type="GO" id="GO:0005524">
    <property type="term" value="F:ATP binding"/>
    <property type="evidence" value="ECO:0007669"/>
    <property type="project" value="UniProtKB-UniRule"/>
</dbReference>
<dbReference type="GO" id="GO:0004824">
    <property type="term" value="F:lysine-tRNA ligase activity"/>
    <property type="evidence" value="ECO:0000318"/>
    <property type="project" value="GO_Central"/>
</dbReference>
<dbReference type="GO" id="GO:0000287">
    <property type="term" value="F:magnesium ion binding"/>
    <property type="evidence" value="ECO:0007669"/>
    <property type="project" value="UniProtKB-UniRule"/>
</dbReference>
<dbReference type="GO" id="GO:0000049">
    <property type="term" value="F:tRNA binding"/>
    <property type="evidence" value="ECO:0000318"/>
    <property type="project" value="GO_Central"/>
</dbReference>
<dbReference type="GO" id="GO:0006430">
    <property type="term" value="P:lysyl-tRNA aminoacylation"/>
    <property type="evidence" value="ECO:0000318"/>
    <property type="project" value="GO_Central"/>
</dbReference>
<dbReference type="CDD" id="cd00775">
    <property type="entry name" value="LysRS_core"/>
    <property type="match status" value="1"/>
</dbReference>
<dbReference type="CDD" id="cd04322">
    <property type="entry name" value="LysRS_N"/>
    <property type="match status" value="1"/>
</dbReference>
<dbReference type="FunFam" id="2.40.50.140:FF:000024">
    <property type="entry name" value="Lysine--tRNA ligase"/>
    <property type="match status" value="1"/>
</dbReference>
<dbReference type="FunFam" id="3.30.930.10:FF:000001">
    <property type="entry name" value="Lysine--tRNA ligase"/>
    <property type="match status" value="1"/>
</dbReference>
<dbReference type="Gene3D" id="3.30.930.10">
    <property type="entry name" value="Bira Bifunctional Protein, Domain 2"/>
    <property type="match status" value="1"/>
</dbReference>
<dbReference type="Gene3D" id="2.40.50.140">
    <property type="entry name" value="Nucleic acid-binding proteins"/>
    <property type="match status" value="1"/>
</dbReference>
<dbReference type="HAMAP" id="MF_00252">
    <property type="entry name" value="Lys_tRNA_synth_class2"/>
    <property type="match status" value="1"/>
</dbReference>
<dbReference type="InterPro" id="IPR004364">
    <property type="entry name" value="Aa-tRNA-synt_II"/>
</dbReference>
<dbReference type="InterPro" id="IPR006195">
    <property type="entry name" value="aa-tRNA-synth_II"/>
</dbReference>
<dbReference type="InterPro" id="IPR045864">
    <property type="entry name" value="aa-tRNA-synth_II/BPL/LPL"/>
</dbReference>
<dbReference type="InterPro" id="IPR002313">
    <property type="entry name" value="Lys-tRNA-ligase_II"/>
</dbReference>
<dbReference type="InterPro" id="IPR034762">
    <property type="entry name" value="Lys-tRNA-ligase_II_bac/euk"/>
</dbReference>
<dbReference type="InterPro" id="IPR044136">
    <property type="entry name" value="Lys-tRNA-ligase_II_N"/>
</dbReference>
<dbReference type="InterPro" id="IPR018149">
    <property type="entry name" value="Lys-tRNA-synth_II_C"/>
</dbReference>
<dbReference type="InterPro" id="IPR012340">
    <property type="entry name" value="NA-bd_OB-fold"/>
</dbReference>
<dbReference type="InterPro" id="IPR004365">
    <property type="entry name" value="NA-bd_OB_tRNA"/>
</dbReference>
<dbReference type="NCBIfam" id="TIGR00499">
    <property type="entry name" value="lysS_bact"/>
    <property type="match status" value="1"/>
</dbReference>
<dbReference type="NCBIfam" id="NF001756">
    <property type="entry name" value="PRK00484.1"/>
    <property type="match status" value="1"/>
</dbReference>
<dbReference type="PANTHER" id="PTHR42918:SF15">
    <property type="entry name" value="LYSINE--TRNA LIGASE, CHLOROPLASTIC_MITOCHONDRIAL"/>
    <property type="match status" value="1"/>
</dbReference>
<dbReference type="PANTHER" id="PTHR42918">
    <property type="entry name" value="LYSYL-TRNA SYNTHETASE"/>
    <property type="match status" value="1"/>
</dbReference>
<dbReference type="Pfam" id="PF00152">
    <property type="entry name" value="tRNA-synt_2"/>
    <property type="match status" value="1"/>
</dbReference>
<dbReference type="Pfam" id="PF01336">
    <property type="entry name" value="tRNA_anti-codon"/>
    <property type="match status" value="1"/>
</dbReference>
<dbReference type="PIRSF" id="PIRSF039101">
    <property type="entry name" value="LysRS2"/>
    <property type="match status" value="1"/>
</dbReference>
<dbReference type="PRINTS" id="PR00982">
    <property type="entry name" value="TRNASYNTHLYS"/>
</dbReference>
<dbReference type="SUPFAM" id="SSF55681">
    <property type="entry name" value="Class II aaRS and biotin synthetases"/>
    <property type="match status" value="1"/>
</dbReference>
<dbReference type="SUPFAM" id="SSF50249">
    <property type="entry name" value="Nucleic acid-binding proteins"/>
    <property type="match status" value="1"/>
</dbReference>
<dbReference type="PROSITE" id="PS50862">
    <property type="entry name" value="AA_TRNA_LIGASE_II"/>
    <property type="match status" value="1"/>
</dbReference>
<gene>
    <name evidence="1" type="primary">lysS</name>
    <name type="ordered locus">LA_1995</name>
</gene>
<proteinExistence type="inferred from homology"/>
<keyword id="KW-0030">Aminoacyl-tRNA synthetase</keyword>
<keyword id="KW-0067">ATP-binding</keyword>
<keyword id="KW-0963">Cytoplasm</keyword>
<keyword id="KW-0436">Ligase</keyword>
<keyword id="KW-0460">Magnesium</keyword>
<keyword id="KW-0479">Metal-binding</keyword>
<keyword id="KW-0547">Nucleotide-binding</keyword>
<keyword id="KW-0648">Protein biosynthesis</keyword>
<keyword id="KW-1185">Reference proteome</keyword>